<organism>
    <name type="scientific">Trichoderma harzianum</name>
    <name type="common">Hypocrea lixii</name>
    <dbReference type="NCBI Taxonomy" id="5544"/>
    <lineage>
        <taxon>Eukaryota</taxon>
        <taxon>Fungi</taxon>
        <taxon>Dikarya</taxon>
        <taxon>Ascomycota</taxon>
        <taxon>Pezizomycotina</taxon>
        <taxon>Sordariomycetes</taxon>
        <taxon>Hypocreomycetidae</taxon>
        <taxon>Hypocreales</taxon>
        <taxon>Hypocreaceae</taxon>
        <taxon>Trichoderma</taxon>
    </lineage>
</organism>
<proteinExistence type="evidence at protein level"/>
<feature type="chain" id="PRO_0000455675" description="Hybrid PKS-NRPS synthetase thnA">
    <location>
        <begin position="1"/>
        <end position="4043"/>
    </location>
</feature>
<feature type="domain" description="Ketosynthase family 3 (KS3)" evidence="3 9">
    <location>
        <begin position="6"/>
        <end position="440"/>
    </location>
</feature>
<feature type="domain" description="PKS/mFAS DH" evidence="4">
    <location>
        <begin position="952"/>
        <end position="1258"/>
    </location>
</feature>
<feature type="domain" description="Carrier 1" evidence="2 9">
    <location>
        <begin position="2434"/>
        <end position="2512"/>
    </location>
</feature>
<feature type="domain" description="Carrier 2" evidence="2 9">
    <location>
        <begin position="3614"/>
        <end position="3695"/>
    </location>
</feature>
<feature type="region of interest" description="Malonyl-CoA:ACP transacylase (MAT) domain" evidence="1 9">
    <location>
        <begin position="558"/>
        <end position="894"/>
    </location>
</feature>
<feature type="region of interest" description="Dehydratase (DH) domain" evidence="1 9">
    <location>
        <begin position="952"/>
        <end position="1256"/>
    </location>
</feature>
<feature type="region of interest" description="N-terminal hotdog fold" evidence="4">
    <location>
        <begin position="952"/>
        <end position="1090"/>
    </location>
</feature>
<feature type="region of interest" description="C-terminal hotdog fold" evidence="4">
    <location>
        <begin position="1105"/>
        <end position="1258"/>
    </location>
</feature>
<feature type="region of interest" description="Methyltransferase (MT) domain" evidence="1 9">
    <location>
        <begin position="1417"/>
        <end position="1591"/>
    </location>
</feature>
<feature type="region of interest" description="Ketoreductase (KR) domain" evidence="1 9">
    <location>
        <begin position="2146"/>
        <end position="2320"/>
    </location>
</feature>
<feature type="region of interest" description="Disordered" evidence="5">
    <location>
        <begin position="2521"/>
        <end position="2618"/>
    </location>
</feature>
<feature type="region of interest" description="Condensation (C) domain" evidence="1 9">
    <location>
        <begin position="2626"/>
        <end position="3067"/>
    </location>
</feature>
<feature type="region of interest" description="Adenylation (A) domain" evidence="1 9">
    <location>
        <begin position="3092"/>
        <end position="3496"/>
    </location>
</feature>
<feature type="region of interest" description="Reductase (R) domain" evidence="1 9">
    <location>
        <begin position="3736"/>
        <end position="3954"/>
    </location>
</feature>
<feature type="compositionally biased region" description="Low complexity" evidence="5">
    <location>
        <begin position="2527"/>
        <end position="2536"/>
    </location>
</feature>
<feature type="compositionally biased region" description="Pro residues" evidence="5">
    <location>
        <begin position="2537"/>
        <end position="2547"/>
    </location>
</feature>
<feature type="compositionally biased region" description="Polar residues" evidence="5">
    <location>
        <begin position="2578"/>
        <end position="2605"/>
    </location>
</feature>
<feature type="active site" description="For beta-ketoacyl synthase activity" evidence="3">
    <location>
        <position position="179"/>
    </location>
</feature>
<feature type="active site" description="For beta-ketoacyl synthase activity" evidence="3">
    <location>
        <position position="319"/>
    </location>
</feature>
<feature type="active site" description="For beta-ketoacyl synthase activity" evidence="3">
    <location>
        <position position="360"/>
    </location>
</feature>
<feature type="active site" description="Proton acceptor; for dehydratase activity" evidence="4">
    <location>
        <position position="984"/>
    </location>
</feature>
<feature type="active site" description="Proton donor; for dehydratase activity" evidence="4">
    <location>
        <position position="1166"/>
    </location>
</feature>
<feature type="modified residue" description="O-(pantetheine 4'-phosphoryl)serine" evidence="2">
    <location>
        <position position="2472"/>
    </location>
</feature>
<feature type="modified residue" description="O-(pantetheine 4'-phosphoryl)serine" evidence="2">
    <location>
        <position position="3655"/>
    </location>
</feature>
<keyword id="KW-0436">Ligase</keyword>
<keyword id="KW-0489">Methyltransferase</keyword>
<keyword id="KW-0511">Multifunctional enzyme</keyword>
<keyword id="KW-0560">Oxidoreductase</keyword>
<keyword id="KW-0596">Phosphopantetheine</keyword>
<keyword id="KW-0597">Phosphoprotein</keyword>
<keyword id="KW-1185">Reference proteome</keyword>
<keyword id="KW-0677">Repeat</keyword>
<keyword id="KW-0808">Transferase</keyword>
<sequence length="4043" mass="441739">MGSQNLEPIAIVGSACRFPGGVNSPSALWKLLEDPKDVCTDIPSDRFDTTGFYHPDGKHHGATNVRKSYLLQEDLRLFDTAFFNISPNEADSMDPQQRILLETVYEALEAGGHTMESLRGSDTAVFTGTMGVDYNDTGIRDLNTVPTYFATGVNRAIISNRVSYFFDWHGPSMTIDTACSSSLIAVHQAVKALRTDESRVALACGTQVILNPEMYVIESKLKMLSPTGRSRMWDADADGYARGEGMAAIVLKRLSDAIADGDHIECLIRHTGSNQDGYSNGITVPSTEAQAALIRQTYAQAGLDPERCAEDSPQFFEAHGTGTKAGDPKEAAAIYHSFGRHKSAGDTPLYVGSIKTVIGHLEGSAGLAGLLKASGSIQNGVIAPNLLFQRLNPDIEPFYKGLQVPTKVIPWPQLPAGVPRRASVNSFGFGGSNAHAILEEYRGPSGQSEGTSGSQDGAIFTPFVFSAFSESSLVAQLRATADYLRTQQEKVNAKDLAWTLQSRRSQFPTKLALSALNIEELVSKIDAKLAPLAQNPNIAIGTKASSKAASAGPKILGVFTGQGAQWASMGAELIRSSAFVAKRIDELEQSLAALPASDRPQWSLKAEIMANSDTSRIGEAALSQPLCTAIQVVLVDLLQSAGISFSAVVGHSSGEIAAAYAAGFFSANDAVRIAYYRGLHARLAGNASTGQSGAMIAVGTSWEDAQDLISLRAFKGRLAVAAHNSAASVTLSGDADAVAHAKRVFDDEKKFARVLKVDTAYHSHHMLPCGDPYISSLQSCVIQINKTRKDNSCAWFSSVTPSSQGMEPIDALKDTYWRDNMTNAVLFADAVKNAVASDEQLSLVLEVGPHPALKGPATQNIADVRPSPIPYSGVLSRGANDVNAFSDALGFVWTHFGSQHVDFQSYTKLVSDGERQPKLVVGLPSYQWNHARLHWNESRRSKRLRGRKQATHEILGTILPESTPQDLRWSNILKVSEMPWMEGHQLQGQTVFPAAGYIAMALEASKFLAADKEVKVFEVNDLAIPRAVTFEEGDTSGVETLVTLTDIRQHQNKYLAANFSCYSLPVLSSGSEQEMDLIATATVKIILGTPSVESLMAPPAEDYNLFPIDADRFYTTLEGLGYGYSGPFKAFSSMQRRLDYATGQVATYVYSEDDTSPYLFHPSTLDVAFHAAMLAYSSPGDERLWSLHVPTGIRSVRVNPALCSLLPATGTRLPVRASIDGTSTSFSGYVDLLSEDGEYSAVQIEDLSIKTFAPATQADDRVLFTHTKLDIAGPDGAAVAEGVRPTALEKELAHACERMAYFYVRKWNSELSDDEWANGQPHYKYLHDWVKRTLDLAKKGQHPTLQRKWANDTAEEINALMDQYPDNLDVKMIRTVGEKIPPAVRNETTILEHLLQDNMLDDFYKLGSGFQRYNQFLASMMKQITHRYPHTKILEIGAGTGGATKYLLKAMGDKMASYTYTDISLGFFGKAAEIFKEYSDKMTFKVLDVEKSPAAQGYEQHSYDIVIASNVLHATESLHTTLVNTRKLLKPGGYLLLLEITNNNPIRTGLIWGTFAGWWLGVEDGRRWAPTISPGQWHSALRKAGFAGVDAVTPEIDTVAWPFSIMASQAVDDRVTFLRQPLSSLSPPIHIESLVILGNQSLQTARLAEELADNLRRFCGELTILDSLPTDEESLDLAPQSTFINLVDIDSPIFKDITSEGMGGLQRMFELAKHVLWITSGALIEEPYHMSSITFSRVVRRESGHINLAHLDVSDLQQSDVPKAISKHLLQLVALDEWETPAIGADGQEDQQRILWSKESEAFLENGTLLLPRLVNNVEQNARLNSARRTIYKEVPIRSPTVTLIPPSATSPPSLAEPTSLVPRRSDNLLWVDSSSLMALNVASDSYLFLAVSKEDATGRPLLLLSTTNSVAMAPVATLEAPMDAKTYVKNPSESSSRLLVTAASEILASSLIDRLSPGSSVLVHCSNKDRFLAAALSRRASPAAVMFTFTFDADDKSGTENSAWVPLSGRASNYGIRKAMPSAKPTHFLDLTAGTGLGLRISQLLPPTCHHIEISSLVRNESTVASSCDPDTLTNHLRETCLGDELTSALASEQRELKDLIIAADHLDTSATYHATSAVFWPSTGLVKVGVSSIDSTGLFSRDKTYLLVGLTGKIGQSIAKWLVANGAGCVCLMSRNPNIEPAWIESFQGTGGDVKIYSMDSTDITSVETVMNEIRTTCPPIGGVAHGSMVLHDSLFSKMTVEDMQTVLAPKIDGAIYLDQLFYDDDLDFFVLFSSAACVVGNLGQANYAAANGYLNSLSRQRRRRGVAGSTFDIGQVAGVGYIESAGQIVMDQLSALGLQRLSEADLQQVFAETIRAGRPDPKDAETTPFAVVTSGIRNFSEDENIKGPWFTNPFFSHCVIDAKVAELESDSSDKKSNIPAARQLVKATSLEQALDILKECFATKLRVILQLGSQDIDYDAPLVELGIDSLVAVEVRSWFLKEVRVDIPVLKVVGGASLAELCDRVVDKLPEELLVSVGKQGESQPPASTAQPQPVAPKPKPLPVPSFVVDSNGPPSEVSVSPAGTPLLSAGPASYSATEASTRSGSPSEATRLSQKVSSKLQSYFPPPPEPAVERKRPAKRFIKSVPISLGQSRFWFLQQLLDDQRTHNVAYYYHIKGNLDVGDMERAVRLVASRHEALRTCFVQDETDASQAYQKVLPSSPVRLICKKIDSEDDVASEYQRLRAHDLDMASGELLKLVLLTLSPSSHFLLMYHHHIIMDGISLQVFLSDLEKAYKGESLGPAPKQYPDFSKAQRQAFENGEMKKELAFWRRIFPDGEQPPVLPLLPMARTNARVPMAKFDTHQVQARVDAALAAKVRTVAKQQRSTPFHLYLAAFKALLFCFTDVDELTIGVADGARHDSSLMGSIGFFLNLLTLRFRRQPNQPFTEAIAEARKISHAALENSRVPFDVLLSELNVARSSTYSPFFQAFIDYRQGHQEEQTWGNCQMRMSEEVHTGKTAYDITVDVTETDAAAFIFFRGQKSIYDQEATQLLCDTYVHFLEVLTKEPSLAMSAIPRFSEKQLAEAIQVGRGPKLVSDWPETLPLRIDQVARENPDKVALMDGTGKALTYASMINRIHSIAEALQEAGVGPGLRVLVFQQATSDWPCSMLAIMRLGAIYVPLDLRNPLPRLAAVAQDCEPTAILADASTLDEASQLGVPSARLIDVSLVKTNPSKEVSNDSRAHSTAAILYTSGSTGTPKGIMVTHEGLRNEIEGYTKTWKLGPERVLQQSAFTFNHSSDQIYTGLVNGGMVYVVPWDKRGNALEITKIIQEQGITYTKATPSEYSLWMLYGRESLRLATSWRCAFGGGESLTTTVTQQFADLDLPQLHFFNSYGPTEISISSTKMEIPYRDREALERVGRIPCGYSLPGYYMYAVDEELRPLPAGMPGQLCIGGTGVSLGYLKNQELTDKHFLPNPFATEEDIANGWTRMYLTGDIGHMNQDGTMVFHSRMAGDTQVKIRGLRIELSDIESNIVAASQGALREAVVTLREGDPEFLVAHVVFVPECTIADKETFLQQLLHNLPVPQYMIPVVAIPIDELPLTNHSKVDRKAVKSLPLPHRVDRPDTSDDTELTETMIQLKGLWRGVLGKAIDQLGFDITPFTSFFLVGGNSLLIIRLQSEIRKRFRAAVPLVELLGANTLGEMAQKVEETISVKTIDWEYDTRPPTISASAIASAIASVPIDRARKGSTIVITGATGFLSKHLLPMLDARTDVDVIHCLAVRDIERAYSSPKVIHHSGDLSSPLLGLSNDEFNELSGTADAILHMGAARSFWDSYHVLRPINVAPTSDLVKLAAPRRVPIHYISTASLFGGTTATLDGSAVSAAAYPPPTDGSSGYAATRWASERILERSAADLGVPSSIYRLCPATTRQDAPQALLDEFTHYGSIIRATPDLSGWSGRLDMLPAVLTAQWLCEALLNYEERSGIVQFRNYESLLTVTGAELTASFDQEQSGSGNLEKISLLKWIGKIKKAGFPYFLASHEIAIEKEGSVNDTKLEMRR</sequence>
<accession>A0A0G0AID6</accession>
<gene>
    <name evidence="7" type="primary">thnA</name>
    <name evidence="10" type="ORF">THAR02_03179</name>
</gene>
<reference key="1">
    <citation type="journal article" date="2015" name="Genome Announc.">
        <title>Draft whole-genome sequence of the biocontrol agent Trichoderma harzianum T6776.</title>
        <authorList>
            <person name="Baroncelli R."/>
            <person name="Piaggeschi G."/>
            <person name="Fiorini L."/>
            <person name="Bertolini E."/>
            <person name="Zapparata A."/>
            <person name="Pe M.E."/>
            <person name="Sarrocco S."/>
            <person name="Vannacci G."/>
        </authorList>
    </citation>
    <scope>NUCLEOTIDE SEQUENCE [LARGE SCALE GENOMIC DNA]</scope>
    <source>
        <strain>T6776</strain>
    </source>
</reference>
<reference key="2">
    <citation type="journal article" date="2021" name="Org. Biomol. Chem.">
        <title>Genome mining of cryptic tetronate natural products from a PKS-NRPS encoding gene cluster in Trichoderma harzianum t-22.</title>
        <authorList>
            <person name="Zhu Y."/>
            <person name="Wang J."/>
            <person name="Mou P."/>
            <person name="Yan Y."/>
            <person name="Chen M."/>
            <person name="Tang Y."/>
        </authorList>
    </citation>
    <scope>FUNCTION</scope>
    <scope>DOMAIN</scope>
    <scope>CATALYTIC ACTIVITY</scope>
    <scope>PATHWAY</scope>
</reference>
<name>THNA_TRIHA</name>
<dbReference type="EC" id="2.3.1.-" evidence="6"/>
<dbReference type="EC" id="6.3.2.-" evidence="6"/>
<dbReference type="EMBL" id="JOKZ01000069">
    <property type="protein sequence ID" value="KKP04699.1"/>
    <property type="molecule type" value="Genomic_DNA"/>
</dbReference>
<dbReference type="SMR" id="A0A0G0AID6"/>
<dbReference type="OMA" id="TTFHFFL"/>
<dbReference type="OrthoDB" id="329835at2759"/>
<dbReference type="Proteomes" id="UP000034112">
    <property type="component" value="Unassembled WGS sequence"/>
</dbReference>
<dbReference type="GO" id="GO:0004315">
    <property type="term" value="F:3-oxoacyl-[acyl-carrier-protein] synthase activity"/>
    <property type="evidence" value="ECO:0007669"/>
    <property type="project" value="InterPro"/>
</dbReference>
<dbReference type="GO" id="GO:0004312">
    <property type="term" value="F:fatty acid synthase activity"/>
    <property type="evidence" value="ECO:0007669"/>
    <property type="project" value="TreeGrafter"/>
</dbReference>
<dbReference type="GO" id="GO:0016874">
    <property type="term" value="F:ligase activity"/>
    <property type="evidence" value="ECO:0007669"/>
    <property type="project" value="UniProtKB-KW"/>
</dbReference>
<dbReference type="GO" id="GO:0008168">
    <property type="term" value="F:methyltransferase activity"/>
    <property type="evidence" value="ECO:0007669"/>
    <property type="project" value="UniProtKB-KW"/>
</dbReference>
<dbReference type="GO" id="GO:0016491">
    <property type="term" value="F:oxidoreductase activity"/>
    <property type="evidence" value="ECO:0007669"/>
    <property type="project" value="UniProtKB-KW"/>
</dbReference>
<dbReference type="GO" id="GO:0031177">
    <property type="term" value="F:phosphopantetheine binding"/>
    <property type="evidence" value="ECO:0007669"/>
    <property type="project" value="InterPro"/>
</dbReference>
<dbReference type="GO" id="GO:0006633">
    <property type="term" value="P:fatty acid biosynthetic process"/>
    <property type="evidence" value="ECO:0007669"/>
    <property type="project" value="InterPro"/>
</dbReference>
<dbReference type="GO" id="GO:0032259">
    <property type="term" value="P:methylation"/>
    <property type="evidence" value="ECO:0007669"/>
    <property type="project" value="UniProtKB-KW"/>
</dbReference>
<dbReference type="GO" id="GO:0009403">
    <property type="term" value="P:toxin biosynthetic process"/>
    <property type="evidence" value="ECO:0007669"/>
    <property type="project" value="UniProtKB-ARBA"/>
</dbReference>
<dbReference type="CDD" id="cd05930">
    <property type="entry name" value="A_NRPS"/>
    <property type="match status" value="1"/>
</dbReference>
<dbReference type="CDD" id="cd02440">
    <property type="entry name" value="AdoMet_MTases"/>
    <property type="match status" value="1"/>
</dbReference>
<dbReference type="CDD" id="cd19532">
    <property type="entry name" value="C_PKS-NRPS"/>
    <property type="match status" value="1"/>
</dbReference>
<dbReference type="CDD" id="cd00833">
    <property type="entry name" value="PKS"/>
    <property type="match status" value="1"/>
</dbReference>
<dbReference type="FunFam" id="3.40.47.10:FF:000019">
    <property type="entry name" value="Polyketide synthase type I"/>
    <property type="match status" value="1"/>
</dbReference>
<dbReference type="Gene3D" id="3.30.300.30">
    <property type="match status" value="1"/>
</dbReference>
<dbReference type="Gene3D" id="3.40.47.10">
    <property type="match status" value="1"/>
</dbReference>
<dbReference type="Gene3D" id="1.10.1200.10">
    <property type="entry name" value="ACP-like"/>
    <property type="match status" value="2"/>
</dbReference>
<dbReference type="Gene3D" id="3.30.559.10">
    <property type="entry name" value="Chloramphenicol acetyltransferase-like domain"/>
    <property type="match status" value="1"/>
</dbReference>
<dbReference type="Gene3D" id="3.40.366.10">
    <property type="entry name" value="Malonyl-Coenzyme A Acyl Carrier Protein, domain 2"/>
    <property type="match status" value="1"/>
</dbReference>
<dbReference type="Gene3D" id="3.40.50.12780">
    <property type="entry name" value="N-terminal domain of ligase-like"/>
    <property type="match status" value="1"/>
</dbReference>
<dbReference type="Gene3D" id="3.40.50.720">
    <property type="entry name" value="NAD(P)-binding Rossmann-like Domain"/>
    <property type="match status" value="2"/>
</dbReference>
<dbReference type="Gene3D" id="3.30.559.30">
    <property type="entry name" value="Nonribosomal peptide synthetase, condensation domain"/>
    <property type="match status" value="1"/>
</dbReference>
<dbReference type="Gene3D" id="3.10.129.110">
    <property type="entry name" value="Polyketide synthase dehydratase"/>
    <property type="match status" value="1"/>
</dbReference>
<dbReference type="Gene3D" id="3.40.50.150">
    <property type="entry name" value="Vaccinia Virus protein VP39"/>
    <property type="match status" value="1"/>
</dbReference>
<dbReference type="InterPro" id="IPR001227">
    <property type="entry name" value="Ac_transferase_dom_sf"/>
</dbReference>
<dbReference type="InterPro" id="IPR036736">
    <property type="entry name" value="ACP-like_sf"/>
</dbReference>
<dbReference type="InterPro" id="IPR014043">
    <property type="entry name" value="Acyl_transferase_dom"/>
</dbReference>
<dbReference type="InterPro" id="IPR016035">
    <property type="entry name" value="Acyl_Trfase/lysoPLipase"/>
</dbReference>
<dbReference type="InterPro" id="IPR045851">
    <property type="entry name" value="AMP-bd_C_sf"/>
</dbReference>
<dbReference type="InterPro" id="IPR020845">
    <property type="entry name" value="AMP-binding_CS"/>
</dbReference>
<dbReference type="InterPro" id="IPR000873">
    <property type="entry name" value="AMP-dep_synth/lig_dom"/>
</dbReference>
<dbReference type="InterPro" id="IPR042099">
    <property type="entry name" value="ANL_N_sf"/>
</dbReference>
<dbReference type="InterPro" id="IPR023213">
    <property type="entry name" value="CAT-like_dom_sf"/>
</dbReference>
<dbReference type="InterPro" id="IPR001242">
    <property type="entry name" value="Condensatn"/>
</dbReference>
<dbReference type="InterPro" id="IPR013120">
    <property type="entry name" value="Far_NAD-bd"/>
</dbReference>
<dbReference type="InterPro" id="IPR018201">
    <property type="entry name" value="Ketoacyl_synth_AS"/>
</dbReference>
<dbReference type="InterPro" id="IPR014031">
    <property type="entry name" value="Ketoacyl_synth_C"/>
</dbReference>
<dbReference type="InterPro" id="IPR014030">
    <property type="entry name" value="Ketoacyl_synth_N"/>
</dbReference>
<dbReference type="InterPro" id="IPR016036">
    <property type="entry name" value="Malonyl_transacylase_ACP-bd"/>
</dbReference>
<dbReference type="InterPro" id="IPR013217">
    <property type="entry name" value="Methyltransf_12"/>
</dbReference>
<dbReference type="InterPro" id="IPR036291">
    <property type="entry name" value="NAD(P)-bd_dom_sf"/>
</dbReference>
<dbReference type="InterPro" id="IPR032821">
    <property type="entry name" value="PKS_assoc"/>
</dbReference>
<dbReference type="InterPro" id="IPR020841">
    <property type="entry name" value="PKS_Beta-ketoAc_synthase_dom"/>
</dbReference>
<dbReference type="InterPro" id="IPR042104">
    <property type="entry name" value="PKS_dehydratase_sf"/>
</dbReference>
<dbReference type="InterPro" id="IPR020807">
    <property type="entry name" value="PKS_DH"/>
</dbReference>
<dbReference type="InterPro" id="IPR049551">
    <property type="entry name" value="PKS_DH_C"/>
</dbReference>
<dbReference type="InterPro" id="IPR049552">
    <property type="entry name" value="PKS_DH_N"/>
</dbReference>
<dbReference type="InterPro" id="IPR013968">
    <property type="entry name" value="PKS_KR"/>
</dbReference>
<dbReference type="InterPro" id="IPR049900">
    <property type="entry name" value="PKS_mFAS_DH"/>
</dbReference>
<dbReference type="InterPro" id="IPR050091">
    <property type="entry name" value="PKS_NRPS_Biosynth_Enz"/>
</dbReference>
<dbReference type="InterPro" id="IPR020806">
    <property type="entry name" value="PKS_PP-bd"/>
</dbReference>
<dbReference type="InterPro" id="IPR009081">
    <property type="entry name" value="PP-bd_ACP"/>
</dbReference>
<dbReference type="InterPro" id="IPR006162">
    <property type="entry name" value="Ppantetheine_attach_site"/>
</dbReference>
<dbReference type="InterPro" id="IPR029063">
    <property type="entry name" value="SAM-dependent_MTases_sf"/>
</dbReference>
<dbReference type="InterPro" id="IPR016039">
    <property type="entry name" value="Thiolase-like"/>
</dbReference>
<dbReference type="PANTHER" id="PTHR43775">
    <property type="entry name" value="FATTY ACID SYNTHASE"/>
    <property type="match status" value="1"/>
</dbReference>
<dbReference type="PANTHER" id="PTHR43775:SF20">
    <property type="entry name" value="HYBRID PKS-NRPS SYNTHETASE APDA"/>
    <property type="match status" value="1"/>
</dbReference>
<dbReference type="Pfam" id="PF00698">
    <property type="entry name" value="Acyl_transf_1"/>
    <property type="match status" value="1"/>
</dbReference>
<dbReference type="Pfam" id="PF00501">
    <property type="entry name" value="AMP-binding"/>
    <property type="match status" value="1"/>
</dbReference>
<dbReference type="Pfam" id="PF00668">
    <property type="entry name" value="Condensation"/>
    <property type="match status" value="1"/>
</dbReference>
<dbReference type="Pfam" id="PF16197">
    <property type="entry name" value="KAsynt_C_assoc"/>
    <property type="match status" value="1"/>
</dbReference>
<dbReference type="Pfam" id="PF00109">
    <property type="entry name" value="ketoacyl-synt"/>
    <property type="match status" value="1"/>
</dbReference>
<dbReference type="Pfam" id="PF02801">
    <property type="entry name" value="Ketoacyl-synt_C"/>
    <property type="match status" value="1"/>
</dbReference>
<dbReference type="Pfam" id="PF08659">
    <property type="entry name" value="KR"/>
    <property type="match status" value="1"/>
</dbReference>
<dbReference type="Pfam" id="PF08242">
    <property type="entry name" value="Methyltransf_12"/>
    <property type="match status" value="1"/>
</dbReference>
<dbReference type="Pfam" id="PF07993">
    <property type="entry name" value="NAD_binding_4"/>
    <property type="match status" value="1"/>
</dbReference>
<dbReference type="Pfam" id="PF21089">
    <property type="entry name" value="PKS_DH_N"/>
    <property type="match status" value="1"/>
</dbReference>
<dbReference type="Pfam" id="PF00550">
    <property type="entry name" value="PP-binding"/>
    <property type="match status" value="2"/>
</dbReference>
<dbReference type="Pfam" id="PF14765">
    <property type="entry name" value="PS-DH"/>
    <property type="match status" value="1"/>
</dbReference>
<dbReference type="SMART" id="SM00827">
    <property type="entry name" value="PKS_AT"/>
    <property type="match status" value="1"/>
</dbReference>
<dbReference type="SMART" id="SM00826">
    <property type="entry name" value="PKS_DH"/>
    <property type="match status" value="1"/>
</dbReference>
<dbReference type="SMART" id="SM00822">
    <property type="entry name" value="PKS_KR"/>
    <property type="match status" value="1"/>
</dbReference>
<dbReference type="SMART" id="SM00825">
    <property type="entry name" value="PKS_KS"/>
    <property type="match status" value="1"/>
</dbReference>
<dbReference type="SMART" id="SM00823">
    <property type="entry name" value="PKS_PP"/>
    <property type="match status" value="2"/>
</dbReference>
<dbReference type="SUPFAM" id="SSF56801">
    <property type="entry name" value="Acetyl-CoA synthetase-like"/>
    <property type="match status" value="1"/>
</dbReference>
<dbReference type="SUPFAM" id="SSF47336">
    <property type="entry name" value="ACP-like"/>
    <property type="match status" value="2"/>
</dbReference>
<dbReference type="SUPFAM" id="SSF52777">
    <property type="entry name" value="CoA-dependent acyltransferases"/>
    <property type="match status" value="2"/>
</dbReference>
<dbReference type="SUPFAM" id="SSF52151">
    <property type="entry name" value="FabD/lysophospholipase-like"/>
    <property type="match status" value="1"/>
</dbReference>
<dbReference type="SUPFAM" id="SSF51735">
    <property type="entry name" value="NAD(P)-binding Rossmann-fold domains"/>
    <property type="match status" value="2"/>
</dbReference>
<dbReference type="SUPFAM" id="SSF55048">
    <property type="entry name" value="Probable ACP-binding domain of malonyl-CoA ACP transacylase"/>
    <property type="match status" value="1"/>
</dbReference>
<dbReference type="SUPFAM" id="SSF53335">
    <property type="entry name" value="S-adenosyl-L-methionine-dependent methyltransferases"/>
    <property type="match status" value="1"/>
</dbReference>
<dbReference type="SUPFAM" id="SSF53901">
    <property type="entry name" value="Thiolase-like"/>
    <property type="match status" value="1"/>
</dbReference>
<dbReference type="PROSITE" id="PS00455">
    <property type="entry name" value="AMP_BINDING"/>
    <property type="match status" value="1"/>
</dbReference>
<dbReference type="PROSITE" id="PS50075">
    <property type="entry name" value="CARRIER"/>
    <property type="match status" value="2"/>
</dbReference>
<dbReference type="PROSITE" id="PS00606">
    <property type="entry name" value="KS3_1"/>
    <property type="match status" value="1"/>
</dbReference>
<dbReference type="PROSITE" id="PS52004">
    <property type="entry name" value="KS3_2"/>
    <property type="match status" value="1"/>
</dbReference>
<dbReference type="PROSITE" id="PS00012">
    <property type="entry name" value="PHOSPHOPANTETHEINE"/>
    <property type="match status" value="1"/>
</dbReference>
<dbReference type="PROSITE" id="PS52019">
    <property type="entry name" value="PKS_MFAS_DH"/>
    <property type="match status" value="1"/>
</dbReference>
<comment type="function">
    <text evidence="6">Hybrid PKS-NRPS synthetase; part of the gene cluster that produces the tetronate natural products trihazones (PubMed:33570538). The PKS-NRPS synthetase thnA with the help of the trans-enoyl reductase thnE are responsible for the synthesis of the carboxylmethyl containing trihazone A (PubMed:33570538). The PKS portion of thnA synthesizes beta-keto-triene chain from one acetyl-CoA and 6 equivalents of malonyl-CoA, in collaboration with thnE, which selectively reduces the enoyl intermediate during the first and fourth iteration of the PKS (PubMed:33570538). The NRPS domain selects and activates malate, of which the alpha-hydroxyl group attacks the completed polyketide acyl-S-ACP chain to form the ester product (PubMed:33570538). Intramolecular Dieckmann cyclization catalyzed by the terminal reductase domain releases the product as trihazone A from the PKS-NPRS (PubMed:33570538). The pathway begins with the formation of trihazone A by the hybrid PKS-NRPS synthetase thnA and the trans-enoyl reductase thnE. Trihazone A is further decarboxylated by the 2-oxoglutarate-dependent dioxygenase thnC to produce trihazone D. The function of the FAD-dependent monooxygenase thnD has still to be identified (PubMed:33570538).</text>
</comment>
<comment type="catalytic activity">
    <reaction evidence="6">
        <text>malate + 6 malonyl-CoA + acetyl-CoA + 2 AH2 + 2 S-adenosyl-L-methionine + 5 NADPH + 9 H(+) = trihazone A + 2 A + 2 S-adenosyl-L-homocysteine + 6 CO2 + 5 NADP(+) + 7 CoA + 6 H2O</text>
        <dbReference type="Rhea" id="RHEA:72015"/>
        <dbReference type="ChEBI" id="CHEBI:13193"/>
        <dbReference type="ChEBI" id="CHEBI:15377"/>
        <dbReference type="ChEBI" id="CHEBI:15378"/>
        <dbReference type="ChEBI" id="CHEBI:15595"/>
        <dbReference type="ChEBI" id="CHEBI:16526"/>
        <dbReference type="ChEBI" id="CHEBI:17499"/>
        <dbReference type="ChEBI" id="CHEBI:57287"/>
        <dbReference type="ChEBI" id="CHEBI:57288"/>
        <dbReference type="ChEBI" id="CHEBI:57384"/>
        <dbReference type="ChEBI" id="CHEBI:57783"/>
        <dbReference type="ChEBI" id="CHEBI:57856"/>
        <dbReference type="ChEBI" id="CHEBI:58349"/>
        <dbReference type="ChEBI" id="CHEBI:59789"/>
        <dbReference type="ChEBI" id="CHEBI:190400"/>
    </reaction>
    <physiologicalReaction direction="left-to-right" evidence="6">
        <dbReference type="Rhea" id="RHEA:72016"/>
    </physiologicalReaction>
</comment>
<comment type="pathway">
    <text evidence="6">Secondary metabolite biosynthesis.</text>
</comment>
<comment type="domain">
    <text evidence="9">NRP synthetases are composed of discrete domains (adenylation (A), thiolation (T) or peptidyl carrier protein (PCP) and condensation (C) domains) which when grouped together are referred to as a single module. Each module is responsible for the recognition (via the A domain) and incorporation of a single amino acid into the growing peptide product. Thus, an NRP synthetase is generally composed of one or more modules and can terminate in a thioesterase domain (TE) that releases the newly synthesized peptide from the enzyme. ThnA contains also a polyketide synthase module (PKS) consisting of several catalytic domains including a ketoacyl synthase domain (KS), an acyl transferase domain (AT), a dehydratase domain (DH), a methyltransferase domain (MT), and a ketoreductase domain (KR). Instead of a thioesterase domain (TE), traA finishes with a reductase-like domain (R) for peptide release. ThnA has the following architecture: KS-AT-DH-KR-PCP-C-A-T-R.</text>
</comment>
<comment type="similarity">
    <text evidence="8">In the C-terminal section; belongs to the NRP synthetase family.</text>
</comment>
<evidence type="ECO:0000255" key="1"/>
<evidence type="ECO:0000255" key="2">
    <source>
        <dbReference type="PROSITE-ProRule" id="PRU00258"/>
    </source>
</evidence>
<evidence type="ECO:0000255" key="3">
    <source>
        <dbReference type="PROSITE-ProRule" id="PRU01348"/>
    </source>
</evidence>
<evidence type="ECO:0000255" key="4">
    <source>
        <dbReference type="PROSITE-ProRule" id="PRU01363"/>
    </source>
</evidence>
<evidence type="ECO:0000256" key="5">
    <source>
        <dbReference type="SAM" id="MobiDB-lite"/>
    </source>
</evidence>
<evidence type="ECO:0000269" key="6">
    <source>
    </source>
</evidence>
<evidence type="ECO:0000303" key="7">
    <source>
    </source>
</evidence>
<evidence type="ECO:0000305" key="8"/>
<evidence type="ECO:0000305" key="9">
    <source>
    </source>
</evidence>
<evidence type="ECO:0000312" key="10">
    <source>
        <dbReference type="EMBL" id="KKP04699.1"/>
    </source>
</evidence>
<protein>
    <recommendedName>
        <fullName evidence="7">Hybrid PKS-NRPS synthetase thnA</fullName>
        <ecNumber evidence="6">2.3.1.-</ecNumber>
        <ecNumber evidence="6">6.3.2.-</ecNumber>
    </recommendedName>
    <alternativeName>
        <fullName evidence="7">Trihazone biosynthesis cluster protein A</fullName>
    </alternativeName>
</protein>